<organism>
    <name type="scientific">Xylella fastidiosa (strain Temecula1 / ATCC 700964)</name>
    <dbReference type="NCBI Taxonomy" id="183190"/>
    <lineage>
        <taxon>Bacteria</taxon>
        <taxon>Pseudomonadati</taxon>
        <taxon>Pseudomonadota</taxon>
        <taxon>Gammaproteobacteria</taxon>
        <taxon>Lysobacterales</taxon>
        <taxon>Lysobacteraceae</taxon>
        <taxon>Xylella</taxon>
    </lineage>
</organism>
<accession>Q87E91</accession>
<protein>
    <recommendedName>
        <fullName evidence="1">ATP synthase epsilon chain</fullName>
    </recommendedName>
    <alternativeName>
        <fullName evidence="1">ATP synthase F1 sector epsilon subunit</fullName>
    </alternativeName>
    <alternativeName>
        <fullName evidence="1">F-ATPase epsilon subunit</fullName>
    </alternativeName>
</protein>
<dbReference type="EMBL" id="AE009442">
    <property type="protein sequence ID" value="AAO28306.1"/>
    <property type="status" value="ALT_INIT"/>
    <property type="molecule type" value="Genomic_DNA"/>
</dbReference>
<dbReference type="RefSeq" id="WP_004090067.1">
    <property type="nucleotide sequence ID" value="NC_004556.1"/>
</dbReference>
<dbReference type="SMR" id="Q87E91"/>
<dbReference type="KEGG" id="xft:PD_0427"/>
<dbReference type="HOGENOM" id="CLU_084338_2_0_6"/>
<dbReference type="Proteomes" id="UP000002516">
    <property type="component" value="Chromosome"/>
</dbReference>
<dbReference type="GO" id="GO:0005886">
    <property type="term" value="C:plasma membrane"/>
    <property type="evidence" value="ECO:0007669"/>
    <property type="project" value="UniProtKB-SubCell"/>
</dbReference>
<dbReference type="GO" id="GO:0045259">
    <property type="term" value="C:proton-transporting ATP synthase complex"/>
    <property type="evidence" value="ECO:0007669"/>
    <property type="project" value="UniProtKB-KW"/>
</dbReference>
<dbReference type="GO" id="GO:0005524">
    <property type="term" value="F:ATP binding"/>
    <property type="evidence" value="ECO:0007669"/>
    <property type="project" value="UniProtKB-UniRule"/>
</dbReference>
<dbReference type="GO" id="GO:0046933">
    <property type="term" value="F:proton-transporting ATP synthase activity, rotational mechanism"/>
    <property type="evidence" value="ECO:0007669"/>
    <property type="project" value="UniProtKB-UniRule"/>
</dbReference>
<dbReference type="CDD" id="cd12152">
    <property type="entry name" value="F1-ATPase_delta"/>
    <property type="match status" value="1"/>
</dbReference>
<dbReference type="FunFam" id="2.60.15.10:FF:000001">
    <property type="entry name" value="ATP synthase epsilon chain"/>
    <property type="match status" value="1"/>
</dbReference>
<dbReference type="Gene3D" id="1.20.5.440">
    <property type="entry name" value="ATP synthase delta/epsilon subunit, C-terminal domain"/>
    <property type="match status" value="1"/>
</dbReference>
<dbReference type="Gene3D" id="2.60.15.10">
    <property type="entry name" value="F0F1 ATP synthase delta/epsilon subunit, N-terminal"/>
    <property type="match status" value="1"/>
</dbReference>
<dbReference type="HAMAP" id="MF_00530">
    <property type="entry name" value="ATP_synth_epsil_bac"/>
    <property type="match status" value="1"/>
</dbReference>
<dbReference type="InterPro" id="IPR036794">
    <property type="entry name" value="ATP_F1_dsu/esu_C_sf"/>
</dbReference>
<dbReference type="InterPro" id="IPR001469">
    <property type="entry name" value="ATP_synth_F1_dsu/esu"/>
</dbReference>
<dbReference type="InterPro" id="IPR020546">
    <property type="entry name" value="ATP_synth_F1_dsu/esu_N"/>
</dbReference>
<dbReference type="InterPro" id="IPR020547">
    <property type="entry name" value="ATP_synth_F1_esu_C"/>
</dbReference>
<dbReference type="InterPro" id="IPR036771">
    <property type="entry name" value="ATPsynth_dsu/esu_N"/>
</dbReference>
<dbReference type="NCBIfam" id="TIGR01216">
    <property type="entry name" value="ATP_synt_epsi"/>
    <property type="match status" value="1"/>
</dbReference>
<dbReference type="NCBIfam" id="NF001847">
    <property type="entry name" value="PRK00571.1-4"/>
    <property type="match status" value="1"/>
</dbReference>
<dbReference type="PANTHER" id="PTHR13822">
    <property type="entry name" value="ATP SYNTHASE DELTA/EPSILON CHAIN"/>
    <property type="match status" value="1"/>
</dbReference>
<dbReference type="PANTHER" id="PTHR13822:SF10">
    <property type="entry name" value="ATP SYNTHASE EPSILON CHAIN, CHLOROPLASTIC"/>
    <property type="match status" value="1"/>
</dbReference>
<dbReference type="Pfam" id="PF00401">
    <property type="entry name" value="ATP-synt_DE"/>
    <property type="match status" value="1"/>
</dbReference>
<dbReference type="Pfam" id="PF02823">
    <property type="entry name" value="ATP-synt_DE_N"/>
    <property type="match status" value="1"/>
</dbReference>
<dbReference type="SUPFAM" id="SSF46604">
    <property type="entry name" value="Epsilon subunit of F1F0-ATP synthase C-terminal domain"/>
    <property type="match status" value="1"/>
</dbReference>
<dbReference type="SUPFAM" id="SSF51344">
    <property type="entry name" value="Epsilon subunit of F1F0-ATP synthase N-terminal domain"/>
    <property type="match status" value="1"/>
</dbReference>
<gene>
    <name evidence="1" type="primary">atpC</name>
    <name type="ordered locus">PD_0427</name>
</gene>
<sequence length="140" mass="15191">MSTIRCDIVSAEQEIFHGEATFVVATGELGELGIAPKHAPLITRLKPGKVVITTVNGEQLDFAISGGILEVQPQVVTILADSAIRADTIDEVAVRKAKEEAERILANRGETIDVAKAQQQLVEAVVQMQALERLRRTVKH</sequence>
<feature type="chain" id="PRO_0000188245" description="ATP synthase epsilon chain">
    <location>
        <begin position="1"/>
        <end position="140"/>
    </location>
</feature>
<comment type="function">
    <text evidence="1">Produces ATP from ADP in the presence of a proton gradient across the membrane.</text>
</comment>
<comment type="subunit">
    <text>F-type ATPases have 2 components, CF(1) - the catalytic core - and CF(0) - the membrane proton channel. CF(1) has five subunits: alpha(3), beta(3), gamma(1), delta(1), epsilon(1). CF(0) has three main subunits: a, b and c.</text>
</comment>
<comment type="subcellular location">
    <subcellularLocation>
        <location evidence="1">Cell inner membrane</location>
        <topology evidence="1">Peripheral membrane protein</topology>
    </subcellularLocation>
</comment>
<comment type="similarity">
    <text evidence="1">Belongs to the ATPase epsilon chain family.</text>
</comment>
<comment type="sequence caution" evidence="2">
    <conflict type="erroneous initiation">
        <sequence resource="EMBL-CDS" id="AAO28306"/>
    </conflict>
</comment>
<reference key="1">
    <citation type="journal article" date="2003" name="J. Bacteriol.">
        <title>Comparative analyses of the complete genome sequences of Pierce's disease and citrus variegated chlorosis strains of Xylella fastidiosa.</title>
        <authorList>
            <person name="Van Sluys M.A."/>
            <person name="de Oliveira M.C."/>
            <person name="Monteiro-Vitorello C.B."/>
            <person name="Miyaki C.Y."/>
            <person name="Furlan L.R."/>
            <person name="Camargo L.E.A."/>
            <person name="da Silva A.C.R."/>
            <person name="Moon D.H."/>
            <person name="Takita M.A."/>
            <person name="Lemos E.G.M."/>
            <person name="Machado M.A."/>
            <person name="Ferro M.I.T."/>
            <person name="da Silva F.R."/>
            <person name="Goldman M.H.S."/>
            <person name="Goldman G.H."/>
            <person name="Lemos M.V.F."/>
            <person name="El-Dorry H."/>
            <person name="Tsai S.M."/>
            <person name="Carrer H."/>
            <person name="Carraro D.M."/>
            <person name="de Oliveira R.C."/>
            <person name="Nunes L.R."/>
            <person name="Siqueira W.J."/>
            <person name="Coutinho L.L."/>
            <person name="Kimura E.T."/>
            <person name="Ferro E.S."/>
            <person name="Harakava R."/>
            <person name="Kuramae E.E."/>
            <person name="Marino C.L."/>
            <person name="Giglioti E."/>
            <person name="Abreu I.L."/>
            <person name="Alves L.M.C."/>
            <person name="do Amaral A.M."/>
            <person name="Baia G.S."/>
            <person name="Blanco S.R."/>
            <person name="Brito M.S."/>
            <person name="Cannavan F.S."/>
            <person name="Celestino A.V."/>
            <person name="da Cunha A.F."/>
            <person name="Fenille R.C."/>
            <person name="Ferro J.A."/>
            <person name="Formighieri E.F."/>
            <person name="Kishi L.T."/>
            <person name="Leoni S.G."/>
            <person name="Oliveira A.R."/>
            <person name="Rosa V.E. Jr."/>
            <person name="Sassaki F.T."/>
            <person name="Sena J.A.D."/>
            <person name="de Souza A.A."/>
            <person name="Truffi D."/>
            <person name="Tsukumo F."/>
            <person name="Yanai G.M."/>
            <person name="Zaros L.G."/>
            <person name="Civerolo E.L."/>
            <person name="Simpson A.J.G."/>
            <person name="Almeida N.F. Jr."/>
            <person name="Setubal J.C."/>
            <person name="Kitajima J.P."/>
        </authorList>
    </citation>
    <scope>NUCLEOTIDE SEQUENCE [LARGE SCALE GENOMIC DNA]</scope>
    <source>
        <strain>Temecula1 / ATCC 700964</strain>
    </source>
</reference>
<keyword id="KW-0066">ATP synthesis</keyword>
<keyword id="KW-0997">Cell inner membrane</keyword>
<keyword id="KW-1003">Cell membrane</keyword>
<keyword id="KW-0139">CF(1)</keyword>
<keyword id="KW-0375">Hydrogen ion transport</keyword>
<keyword id="KW-0406">Ion transport</keyword>
<keyword id="KW-0472">Membrane</keyword>
<keyword id="KW-1185">Reference proteome</keyword>
<keyword id="KW-0813">Transport</keyword>
<evidence type="ECO:0000255" key="1">
    <source>
        <dbReference type="HAMAP-Rule" id="MF_00530"/>
    </source>
</evidence>
<evidence type="ECO:0000305" key="2"/>
<name>ATPE_XYLFT</name>
<proteinExistence type="inferred from homology"/>